<sequence>MTIPFWQEKTLEQMTENEWESLCDGCGKCCLHKLMDEDSDEVYYTNVACSWLNDKTCSCKDYPNRFTSGEECLKLTRDKIDEFHWLPDTCAYRLLSESKPIPEWHPLITGSKSEMHAAGESVRNKVVYEIDVVDWEDHILNHPNR</sequence>
<proteinExistence type="inferred from homology"/>
<feature type="chain" id="PRO_1000147706" description="UPF0260 protein VS_0923">
    <location>
        <begin position="1"/>
        <end position="145"/>
    </location>
</feature>
<accession>B7VLA3</accession>
<dbReference type="EMBL" id="FM954972">
    <property type="protein sequence ID" value="CAV17935.1"/>
    <property type="molecule type" value="Genomic_DNA"/>
</dbReference>
<dbReference type="STRING" id="575788.VS_0923"/>
<dbReference type="KEGG" id="vsp:VS_0923"/>
<dbReference type="PATRIC" id="fig|575788.5.peg.2248"/>
<dbReference type="eggNOG" id="COG2983">
    <property type="taxonomic scope" value="Bacteria"/>
</dbReference>
<dbReference type="HOGENOM" id="CLU_109769_2_0_6"/>
<dbReference type="Proteomes" id="UP000009100">
    <property type="component" value="Chromosome 1"/>
</dbReference>
<dbReference type="HAMAP" id="MF_00676">
    <property type="entry name" value="UPF0260"/>
    <property type="match status" value="1"/>
</dbReference>
<dbReference type="InterPro" id="IPR005358">
    <property type="entry name" value="Puta_zinc/iron-chelating_dom"/>
</dbReference>
<dbReference type="InterPro" id="IPR008228">
    <property type="entry name" value="UCP006173"/>
</dbReference>
<dbReference type="NCBIfam" id="NF003501">
    <property type="entry name" value="PRK05170.1-5"/>
    <property type="match status" value="1"/>
</dbReference>
<dbReference type="NCBIfam" id="NF003503">
    <property type="entry name" value="PRK05170.2-1"/>
    <property type="match status" value="1"/>
</dbReference>
<dbReference type="NCBIfam" id="NF003507">
    <property type="entry name" value="PRK05170.2-5"/>
    <property type="match status" value="1"/>
</dbReference>
<dbReference type="PANTHER" id="PTHR37421">
    <property type="entry name" value="UPF0260 PROTEIN YCGN"/>
    <property type="match status" value="1"/>
</dbReference>
<dbReference type="PANTHER" id="PTHR37421:SF1">
    <property type="entry name" value="UPF0260 PROTEIN YCGN"/>
    <property type="match status" value="1"/>
</dbReference>
<dbReference type="Pfam" id="PF03692">
    <property type="entry name" value="CxxCxxCC"/>
    <property type="match status" value="1"/>
</dbReference>
<dbReference type="PIRSF" id="PIRSF006173">
    <property type="entry name" value="UCP006173"/>
    <property type="match status" value="1"/>
</dbReference>
<gene>
    <name type="ordered locus">VS_0923</name>
</gene>
<comment type="similarity">
    <text evidence="1">Belongs to the UPF0260 family.</text>
</comment>
<organism>
    <name type="scientific">Vibrio atlanticus (strain LGP32)</name>
    <name type="common">Vibrio splendidus (strain Mel32)</name>
    <dbReference type="NCBI Taxonomy" id="575788"/>
    <lineage>
        <taxon>Bacteria</taxon>
        <taxon>Pseudomonadati</taxon>
        <taxon>Pseudomonadota</taxon>
        <taxon>Gammaproteobacteria</taxon>
        <taxon>Vibrionales</taxon>
        <taxon>Vibrionaceae</taxon>
        <taxon>Vibrio</taxon>
    </lineage>
</organism>
<reference key="1">
    <citation type="submission" date="2009-02" db="EMBL/GenBank/DDBJ databases">
        <title>Vibrio splendidus str. LGP32 complete genome.</title>
        <authorList>
            <person name="Mazel D."/>
            <person name="Le Roux F."/>
        </authorList>
    </citation>
    <scope>NUCLEOTIDE SEQUENCE [LARGE SCALE GENOMIC DNA]</scope>
    <source>
        <strain>LGP32</strain>
    </source>
</reference>
<evidence type="ECO:0000255" key="1">
    <source>
        <dbReference type="HAMAP-Rule" id="MF_00676"/>
    </source>
</evidence>
<name>Y923_VIBA3</name>
<protein>
    <recommendedName>
        <fullName evidence="1">UPF0260 protein VS_0923</fullName>
    </recommendedName>
</protein>